<organism>
    <name type="scientific">Tyrannophasma gladiator</name>
    <name type="common">Gladiator</name>
    <name type="synonym">Heel-walker</name>
    <dbReference type="NCBI Taxonomy" id="270861"/>
    <lineage>
        <taxon>Eukaryota</taxon>
        <taxon>Metazoa</taxon>
        <taxon>Ecdysozoa</taxon>
        <taxon>Arthropoda</taxon>
        <taxon>Hexapoda</taxon>
        <taxon>Insecta</taxon>
        <taxon>Pterygota</taxon>
        <taxon>Neoptera</taxon>
        <taxon>Polyneoptera</taxon>
        <taxon>Mantophasmatodea</taxon>
        <taxon>Mantophasmatodea incertae sedis</taxon>
        <taxon>Tyrannophasma</taxon>
    </lineage>
</organism>
<accession>B3A0I5</accession>
<reference evidence="5" key="1">
    <citation type="journal article" date="2012" name="Syst. Biol.">
        <title>Peptidomics-based phylogeny and biogeography of Mantophasmatodea (Hexapoda).</title>
        <authorList>
            <person name="Predel R."/>
            <person name="Neupert S."/>
            <person name="Huetteroth W."/>
            <person name="Kahnt J."/>
            <person name="Waidelich D."/>
            <person name="Roth S."/>
        </authorList>
    </citation>
    <scope>PROTEIN SEQUENCE</scope>
    <scope>AMIDATION AT LEU-15</scope>
    <source>
        <tissue evidence="3">Thoracic perisympathetic organs</tissue>
    </source>
</reference>
<name>FAR12_TYRGL</name>
<comment type="function">
    <text evidence="1">FMRFamides and FMRFamide-like peptides are neuropeptides.</text>
</comment>
<comment type="subcellular location">
    <subcellularLocation>
        <location evidence="6">Secreted</location>
    </subcellularLocation>
</comment>
<comment type="similarity">
    <text evidence="2">Belongs to the FARP (FMRF amide related peptide) family.</text>
</comment>
<keyword id="KW-0027">Amidation</keyword>
<keyword id="KW-0903">Direct protein sequencing</keyword>
<keyword id="KW-0527">Neuropeptide</keyword>
<keyword id="KW-0964">Secreted</keyword>
<protein>
    <recommendedName>
        <fullName evidence="4">Extended FMRFamide-12</fullName>
        <shortName evidence="4">FMRFa-12</shortName>
    </recommendedName>
</protein>
<feature type="peptide" id="PRO_0000421561" description="Extended FMRFamide-12" evidence="3">
    <location>
        <begin position="1"/>
        <end position="15"/>
    </location>
</feature>
<feature type="modified residue" description="Leucine amide" evidence="3">
    <location>
        <position position="15"/>
    </location>
</feature>
<feature type="unsure residue" description="L or I" evidence="3">
    <location>
        <position position="15"/>
    </location>
</feature>
<dbReference type="GO" id="GO:0005576">
    <property type="term" value="C:extracellular region"/>
    <property type="evidence" value="ECO:0007669"/>
    <property type="project" value="UniProtKB-SubCell"/>
</dbReference>
<dbReference type="GO" id="GO:0007218">
    <property type="term" value="P:neuropeptide signaling pathway"/>
    <property type="evidence" value="ECO:0007669"/>
    <property type="project" value="UniProtKB-KW"/>
</dbReference>
<sequence>SPVPEDDRGDNFVRL</sequence>
<proteinExistence type="evidence at protein level"/>
<evidence type="ECO:0000250" key="1">
    <source>
        <dbReference type="UniProtKB" id="P34405"/>
    </source>
</evidence>
<evidence type="ECO:0000255" key="2"/>
<evidence type="ECO:0000269" key="3">
    <source>
    </source>
</evidence>
<evidence type="ECO:0000303" key="4">
    <source>
    </source>
</evidence>
<evidence type="ECO:0000305" key="5"/>
<evidence type="ECO:0000305" key="6">
    <source>
    </source>
</evidence>